<gene>
    <name type="primary">P/V</name>
</gene>
<proteinExistence type="inferred from homology"/>
<name>PHOSP_MEASI</name>
<evidence type="ECO:0000250" key="1"/>
<evidence type="ECO:0000250" key="2">
    <source>
        <dbReference type="UniProtKB" id="P04859"/>
    </source>
</evidence>
<evidence type="ECO:0000250" key="3">
    <source>
        <dbReference type="UniProtKB" id="P06162"/>
    </source>
</evidence>
<evidence type="ECO:0000250" key="4">
    <source>
        <dbReference type="UniProtKB" id="Q77M42"/>
    </source>
</evidence>
<evidence type="ECO:0000250" key="5">
    <source>
        <dbReference type="UniProtKB" id="Q83623"/>
    </source>
</evidence>
<evidence type="ECO:0000250" key="6">
    <source>
        <dbReference type="UniProtKB" id="Q9WMB4"/>
    </source>
</evidence>
<evidence type="ECO:0000256" key="7">
    <source>
        <dbReference type="SAM" id="MobiDB-lite"/>
    </source>
</evidence>
<evidence type="ECO:0000305" key="8"/>
<protein>
    <recommendedName>
        <fullName>Phosphoprotein</fullName>
        <shortName>Protein P</shortName>
    </recommendedName>
</protein>
<dbReference type="EMBL" id="X16566">
    <property type="protein sequence ID" value="CAA34564.1"/>
    <property type="molecule type" value="Genomic_RNA"/>
</dbReference>
<dbReference type="SMR" id="P26033"/>
<dbReference type="GO" id="GO:0003723">
    <property type="term" value="F:RNA binding"/>
    <property type="evidence" value="ECO:0007669"/>
    <property type="project" value="InterPro"/>
</dbReference>
<dbReference type="GO" id="GO:0003968">
    <property type="term" value="F:RNA-directed RNA polymerase activity"/>
    <property type="evidence" value="ECO:0007669"/>
    <property type="project" value="InterPro"/>
</dbReference>
<dbReference type="GO" id="GO:0006351">
    <property type="term" value="P:DNA-templated transcription"/>
    <property type="evidence" value="ECO:0007669"/>
    <property type="project" value="InterPro"/>
</dbReference>
<dbReference type="GO" id="GO:0019079">
    <property type="term" value="P:viral genome replication"/>
    <property type="evidence" value="ECO:0007669"/>
    <property type="project" value="InterPro"/>
</dbReference>
<dbReference type="CDD" id="cd21031">
    <property type="entry name" value="MEV_P-protein-C_like"/>
    <property type="match status" value="1"/>
</dbReference>
<dbReference type="Gene3D" id="1.20.5.110">
    <property type="match status" value="1"/>
</dbReference>
<dbReference type="Gene3D" id="1.10.8.10">
    <property type="entry name" value="DNA helicase RuvA subunit, C-terminal domain"/>
    <property type="match status" value="1"/>
</dbReference>
<dbReference type="InterPro" id="IPR004897">
    <property type="entry name" value="P/V_Pprotein_paramyxoviral"/>
</dbReference>
<dbReference type="InterPro" id="IPR028243">
    <property type="entry name" value="Paramyxo_P/V_N"/>
</dbReference>
<dbReference type="InterPro" id="IPR016075">
    <property type="entry name" value="RNA_pol_Pprot-P_XD_paramyxovir"/>
</dbReference>
<dbReference type="Pfam" id="PF03210">
    <property type="entry name" value="Paramyx_P_V_C"/>
    <property type="match status" value="1"/>
</dbReference>
<dbReference type="Pfam" id="PF13825">
    <property type="entry name" value="Paramyxo_P_V_N"/>
    <property type="match status" value="1"/>
</dbReference>
<dbReference type="SUPFAM" id="SSF101089">
    <property type="entry name" value="Phosphoprotein XD domain"/>
    <property type="match status" value="1"/>
</dbReference>
<feature type="chain" id="PRO_0000142691" description="Phosphoprotein">
    <location>
        <begin position="1"/>
        <end position="507"/>
    </location>
</feature>
<feature type="region of interest" description="Interaction with N0" evidence="4">
    <location>
        <begin position="1"/>
        <end position="48"/>
    </location>
</feature>
<feature type="region of interest" description="Disordered" evidence="7">
    <location>
        <begin position="40"/>
        <end position="98"/>
    </location>
</feature>
<feature type="region of interest" description="Disordered" evidence="7">
    <location>
        <begin position="134"/>
        <end position="174"/>
    </location>
</feature>
<feature type="region of interest" description="Disordered" evidence="7">
    <location>
        <begin position="201"/>
        <end position="231"/>
    </location>
</feature>
<feature type="region of interest" description="Disordered" evidence="7">
    <location>
        <begin position="251"/>
        <end position="305"/>
    </location>
</feature>
<feature type="region of interest" description="Multimerization" evidence="4">
    <location>
        <begin position="304"/>
        <end position="376"/>
    </location>
</feature>
<feature type="region of interest" description="Interaction with the L polymerase" evidence="6">
    <location>
        <begin position="361"/>
        <end position="377"/>
    </location>
</feature>
<feature type="region of interest" description="Interaction with the L polymerase" evidence="6">
    <location>
        <begin position="396"/>
        <end position="410"/>
    </location>
</feature>
<feature type="region of interest" description="X domain (XD)" evidence="6">
    <location>
        <begin position="457"/>
        <end position="507"/>
    </location>
</feature>
<feature type="region of interest" description="Interaction with the nucleocapsid (N-RNA)" evidence="4">
    <location>
        <begin position="459"/>
        <end position="507"/>
    </location>
</feature>
<feature type="compositionally biased region" description="Low complexity" evidence="7">
    <location>
        <begin position="134"/>
        <end position="145"/>
    </location>
</feature>
<feature type="compositionally biased region" description="Acidic residues" evidence="7">
    <location>
        <begin position="146"/>
        <end position="160"/>
    </location>
</feature>
<feature type="compositionally biased region" description="Low complexity" evidence="7">
    <location>
        <begin position="260"/>
        <end position="270"/>
    </location>
</feature>
<feature type="compositionally biased region" description="Polar residues" evidence="7">
    <location>
        <begin position="279"/>
        <end position="300"/>
    </location>
</feature>
<feature type="modified residue" description="Phosphoserine" evidence="4">
    <location>
        <position position="86"/>
    </location>
</feature>
<feature type="modified residue" description="Phosphoserine" evidence="4">
    <location>
        <position position="151"/>
    </location>
</feature>
<accession>P26033</accession>
<sequence>MAEEQARHVKNGLECIRALKAEPIGSLAIGEAMAAWSEISDNPGQEQATCKEEEAGASGLSKPCLSAIGSTEGGAPRIRGQGSGESDDDTETLGFPSRNLQASSTGLQCYYVYDHSGEAVKGIQDADSIMVQSGLDGDSTLSGGDNESENSDVDIGEPDTEGYAITDRGPAPISMGFRASDVETAEGGEIHELLRLQSRGNNFPKLGKTLNVPPPPDPGRASTSETPIKKGTDARLASFGTEIASLLTDGATQCARKSPSEPSGPGAPAGNVPECVSNAALTQEWTPESGTTISPRSQNKGKGGDYYDDELFSDVQDIKTALAKIHEDNQKVISKLESLLLLKGEVESIKKQINKQNISISTLEGHLSSIMIAIPGLGKDPNDPTADVEINPDLKPIIGRDSGRALAEVLKKPVASRQLQGMTNGRTSSRGQLLKEFQLKPIGKKMSSAVGFVPDTGPASRSVIRSIIKSSRIEEDRKRYLMTLLDDIKGANDLAKFHQMLMKIIMK</sequence>
<keyword id="KW-0597">Phosphoprotein</keyword>
<keyword id="KW-0691">RNA editing</keyword>
<keyword id="KW-0693">Viral RNA replication</keyword>
<organismHost>
    <name type="scientific">Homo sapiens</name>
    <name type="common">Human</name>
    <dbReference type="NCBI Taxonomy" id="9606"/>
</organismHost>
<comment type="function">
    <text evidence="3 4">Essential cofactor of the RNA polymerase L that plays a central role in the transcription and replication by forming the polymerase complex with RNA polymerase L and recruiting L to the genomic N-RNA template for RNA synthesis (By similarity). Also plays a central role in the encapsidation of nascent RNA chains by forming the encapsidation complex with the nucleocapsid protein N (N-P complex). Acts as a chaperone for newly synthesized free N protein, so-called N0, allowing encapsidation of nascent RNA chains during replication (By similarity). The nucleoprotein protein N prevents excessive phosphorylation of P, which leads to down-regulation of viral transcription/ replication. Participates, together with N, in the formation of viral factories (viroplasms), which are large inclusions in the host cytoplasm where replication takes place (By similarity).</text>
</comment>
<comment type="subunit">
    <text evidence="4 5 6">Homotetramer (By similarity). Interacts (via multimerization domain and XD domain) with polymerase L; this interaction forms the polymerase L-P complex (By similarity). Interacts (via N-terminus) with N0 (via Ncore); this interaction allows P to chaperon N0 to avoid N polymerization and non-specific RNA binding before encapsidation (By similarity). Interacts (via C-terminus) with N-RNA template (via Ntail); this interaction maintains the P/L complex anchored to the nucleocapsid template during the sequential transcription (By similarity). Interacts (via C-terminus) with protein C this interaction allows C to associate with the ribonucleocapsid (By similarity).</text>
</comment>
<comment type="domain">
    <text evidence="2 3 4 5">The N-terminus consists of a long intrinsically disordered tail. The central part contains the coiled-coil multimerization domain (MD) (By similarity). Forms a four-stranded coiled coil structure (By similarity). The C-terminus constitutes the alpha-helical domain (XD) that binds to the nucleocapsid (N-RNA complex) (By similarity).</text>
</comment>
<comment type="PTM">
    <text evidence="4">Phosphorylation on serines by host CK2 is necessary for the formation of viral factories.</text>
</comment>
<comment type="RNA editing">
    <location>
        <position position="231" evidence="1"/>
    </location>
    <text evidence="1">Partially edited. RNA editing at this position consists of an insertion of one guanine nucleotide. The sequence displayed here is the P protein, derived from the unedited RNA. The edited RNA gives rise to the V protein (AC P26036) (By similarity).</text>
</comment>
<comment type="similarity">
    <text evidence="8">Belongs to the morbillivirus P protein family.</text>
</comment>
<organism>
    <name type="scientific">Measles virus (strain IP-3-Ca)</name>
    <name type="common">MeV</name>
    <name type="synonym">Subacute sclerose panencephalitis virus</name>
    <dbReference type="NCBI Taxonomy" id="11237"/>
    <lineage>
        <taxon>Viruses</taxon>
        <taxon>Riboviria</taxon>
        <taxon>Orthornavirae</taxon>
        <taxon>Negarnaviricota</taxon>
        <taxon>Haploviricotina</taxon>
        <taxon>Monjiviricetes</taxon>
        <taxon>Mononegavirales</taxon>
        <taxon>Paramyxoviridae</taxon>
        <taxon>Orthoparamyxovirinae</taxon>
        <taxon>Morbillivirus</taxon>
        <taxon>Morbillivirus hominis</taxon>
        <taxon>Measles morbillivirus</taxon>
    </lineage>
</organism>
<reference key="1">
    <citation type="journal article" date="1992" name="Virology">
        <title>Subacute sclerosing panencephalitis is typically characterized by alterations in the fusion protein cytoplasmic domain of the persisting measles virus.</title>
        <authorList>
            <person name="Schmid A."/>
            <person name="Spielhofer P."/>
            <person name="Cattaneo R."/>
            <person name="Baczko K."/>
            <person name="Ter Meulen V."/>
            <person name="Billeter M.A."/>
        </authorList>
    </citation>
    <scope>NUCLEOTIDE SEQUENCE [GENOMIC RNA]</scope>
</reference>